<sequence length="169" mass="18147">MSGTHKKLGARHKARKRAVDFLFEAEARDLDPVDLATERAELSGKDDSVAPVAPYTVTVVTGVAENLDRLDEVIRSHLQDWTLERLPAVDRAILRIAVWELFHATDVPPVVAVDEAVELAKQLSTDESPGFVNGILGQVVLVAPQVRSAAAATSRRTETAGGESNDAGS</sequence>
<protein>
    <recommendedName>
        <fullName evidence="1">Transcription antitermination protein NusB</fullName>
    </recommendedName>
    <alternativeName>
        <fullName evidence="1">Antitermination factor NusB</fullName>
    </alternativeName>
</protein>
<feature type="chain" id="PRO_0000265573" description="Transcription antitermination protein NusB">
    <location>
        <begin position="1"/>
        <end position="169"/>
    </location>
</feature>
<feature type="region of interest" description="Disordered" evidence="2">
    <location>
        <begin position="150"/>
        <end position="169"/>
    </location>
</feature>
<reference key="1">
    <citation type="journal article" date="2006" name="Proc. Natl. Acad. Sci. U.S.A.">
        <title>The complete genome of Rhodococcus sp. RHA1 provides insights into a catabolic powerhouse.</title>
        <authorList>
            <person name="McLeod M.P."/>
            <person name="Warren R.L."/>
            <person name="Hsiao W.W.L."/>
            <person name="Araki N."/>
            <person name="Myhre M."/>
            <person name="Fernandes C."/>
            <person name="Miyazawa D."/>
            <person name="Wong W."/>
            <person name="Lillquist A.L."/>
            <person name="Wang D."/>
            <person name="Dosanjh M."/>
            <person name="Hara H."/>
            <person name="Petrescu A."/>
            <person name="Morin R.D."/>
            <person name="Yang G."/>
            <person name="Stott J.M."/>
            <person name="Schein J.E."/>
            <person name="Shin H."/>
            <person name="Smailus D."/>
            <person name="Siddiqui A.S."/>
            <person name="Marra M.A."/>
            <person name="Jones S.J.M."/>
            <person name="Holt R."/>
            <person name="Brinkman F.S.L."/>
            <person name="Miyauchi K."/>
            <person name="Fukuda M."/>
            <person name="Davies J.E."/>
            <person name="Mohn W.W."/>
            <person name="Eltis L.D."/>
        </authorList>
    </citation>
    <scope>NUCLEOTIDE SEQUENCE [LARGE SCALE GENOMIC DNA]</scope>
    <source>
        <strain>RHA1</strain>
    </source>
</reference>
<name>NUSB_RHOJR</name>
<gene>
    <name evidence="1" type="primary">nusB</name>
    <name type="ordered locus">RHA1_ro07146</name>
</gene>
<evidence type="ECO:0000255" key="1">
    <source>
        <dbReference type="HAMAP-Rule" id="MF_00073"/>
    </source>
</evidence>
<evidence type="ECO:0000256" key="2">
    <source>
        <dbReference type="SAM" id="MobiDB-lite"/>
    </source>
</evidence>
<proteinExistence type="inferred from homology"/>
<dbReference type="EMBL" id="CP000431">
    <property type="protein sequence ID" value="ABG98910.1"/>
    <property type="molecule type" value="Genomic_DNA"/>
</dbReference>
<dbReference type="RefSeq" id="WP_009480418.1">
    <property type="nucleotide sequence ID" value="NC_008268.1"/>
</dbReference>
<dbReference type="SMR" id="Q0S0M6"/>
<dbReference type="KEGG" id="rha:RHA1_ro07146"/>
<dbReference type="eggNOG" id="COG0781">
    <property type="taxonomic scope" value="Bacteria"/>
</dbReference>
<dbReference type="HOGENOM" id="CLU_087843_2_3_11"/>
<dbReference type="OrthoDB" id="3528057at2"/>
<dbReference type="Proteomes" id="UP000008710">
    <property type="component" value="Chromosome"/>
</dbReference>
<dbReference type="GO" id="GO:0005829">
    <property type="term" value="C:cytosol"/>
    <property type="evidence" value="ECO:0007669"/>
    <property type="project" value="TreeGrafter"/>
</dbReference>
<dbReference type="GO" id="GO:0003723">
    <property type="term" value="F:RNA binding"/>
    <property type="evidence" value="ECO:0007669"/>
    <property type="project" value="UniProtKB-UniRule"/>
</dbReference>
<dbReference type="GO" id="GO:0006353">
    <property type="term" value="P:DNA-templated transcription termination"/>
    <property type="evidence" value="ECO:0007669"/>
    <property type="project" value="UniProtKB-UniRule"/>
</dbReference>
<dbReference type="GO" id="GO:0031564">
    <property type="term" value="P:transcription antitermination"/>
    <property type="evidence" value="ECO:0007669"/>
    <property type="project" value="UniProtKB-KW"/>
</dbReference>
<dbReference type="CDD" id="cd00619">
    <property type="entry name" value="Terminator_NusB"/>
    <property type="match status" value="1"/>
</dbReference>
<dbReference type="Gene3D" id="1.10.940.10">
    <property type="entry name" value="NusB-like"/>
    <property type="match status" value="1"/>
</dbReference>
<dbReference type="HAMAP" id="MF_00073">
    <property type="entry name" value="NusB"/>
    <property type="match status" value="1"/>
</dbReference>
<dbReference type="InterPro" id="IPR035926">
    <property type="entry name" value="NusB-like_sf"/>
</dbReference>
<dbReference type="InterPro" id="IPR011605">
    <property type="entry name" value="NusB_fam"/>
</dbReference>
<dbReference type="InterPro" id="IPR006027">
    <property type="entry name" value="NusB_RsmB_TIM44"/>
</dbReference>
<dbReference type="NCBIfam" id="TIGR01951">
    <property type="entry name" value="nusB"/>
    <property type="match status" value="1"/>
</dbReference>
<dbReference type="PANTHER" id="PTHR11078:SF3">
    <property type="entry name" value="ANTITERMINATION NUSB DOMAIN-CONTAINING PROTEIN"/>
    <property type="match status" value="1"/>
</dbReference>
<dbReference type="PANTHER" id="PTHR11078">
    <property type="entry name" value="N UTILIZATION SUBSTANCE PROTEIN B-RELATED"/>
    <property type="match status" value="1"/>
</dbReference>
<dbReference type="Pfam" id="PF01029">
    <property type="entry name" value="NusB"/>
    <property type="match status" value="1"/>
</dbReference>
<dbReference type="SUPFAM" id="SSF48013">
    <property type="entry name" value="NusB-like"/>
    <property type="match status" value="1"/>
</dbReference>
<keyword id="KW-0694">RNA-binding</keyword>
<keyword id="KW-0804">Transcription</keyword>
<keyword id="KW-0889">Transcription antitermination</keyword>
<keyword id="KW-0805">Transcription regulation</keyword>
<comment type="function">
    <text evidence="1">Involved in transcription antitermination. Required for transcription of ribosomal RNA (rRNA) genes. Binds specifically to the boxA antiterminator sequence of the ribosomal RNA (rrn) operons.</text>
</comment>
<comment type="similarity">
    <text evidence="1">Belongs to the NusB family.</text>
</comment>
<organism>
    <name type="scientific">Rhodococcus jostii (strain RHA1)</name>
    <dbReference type="NCBI Taxonomy" id="101510"/>
    <lineage>
        <taxon>Bacteria</taxon>
        <taxon>Bacillati</taxon>
        <taxon>Actinomycetota</taxon>
        <taxon>Actinomycetes</taxon>
        <taxon>Mycobacteriales</taxon>
        <taxon>Nocardiaceae</taxon>
        <taxon>Rhodococcus</taxon>
    </lineage>
</organism>
<accession>Q0S0M6</accession>